<name>MTRF_METTM</name>
<protein>
    <recommendedName>
        <fullName>Tetrahydromethanopterin S-methyltransferase subunit F</fullName>
        <ecNumber evidence="3">7.2.1.4</ecNumber>
    </recommendedName>
    <alternativeName>
        <fullName>N5-methyltetrahydromethanopterin--coenzyme M methyltransferase subunit F</fullName>
    </alternativeName>
</protein>
<feature type="chain" id="PRO_0000147552" description="Tetrahydromethanopterin S-methyltransferase subunit F">
    <location>
        <begin position="1"/>
        <end position="68"/>
    </location>
</feature>
<feature type="transmembrane region" description="Helical" evidence="1">
    <location>
        <begin position="45"/>
        <end position="65"/>
    </location>
</feature>
<sequence length="68" mass="7318">MIILSNKPNIRGIKNVVEDIKYRNQLIGRDGRLFAGLIATRISGIAIGFLLAVLLVGVPAMMSILGVI</sequence>
<gene>
    <name type="primary">mtrF</name>
    <name type="ordered locus">MTBMA_c15420</name>
</gene>
<accession>Q50773</accession>
<accession>D9PY23</accession>
<evidence type="ECO:0000255" key="1"/>
<evidence type="ECO:0000269" key="2">
    <source>
    </source>
</evidence>
<evidence type="ECO:0000269" key="3">
    <source>
    </source>
</evidence>
<evidence type="ECO:0000305" key="4"/>
<evidence type="ECO:0000305" key="5">
    <source>
    </source>
</evidence>
<organism>
    <name type="scientific">Methanothermobacter marburgensis (strain ATCC BAA-927 / DSM 2133 / JCM 14651 / NBRC 100331 / OCM 82 / Marburg)</name>
    <name type="common">Methanobacterium thermoautotrophicum</name>
    <dbReference type="NCBI Taxonomy" id="79929"/>
    <lineage>
        <taxon>Archaea</taxon>
        <taxon>Methanobacteriati</taxon>
        <taxon>Methanobacteriota</taxon>
        <taxon>Methanomada group</taxon>
        <taxon>Methanobacteria</taxon>
        <taxon>Methanobacteriales</taxon>
        <taxon>Methanobacteriaceae</taxon>
        <taxon>Methanothermobacter</taxon>
    </lineage>
</organism>
<proteinExistence type="evidence at protein level"/>
<dbReference type="EC" id="7.2.1.4" evidence="3"/>
<dbReference type="EMBL" id="X84219">
    <property type="protein sequence ID" value="CAA59001.1"/>
    <property type="molecule type" value="Genomic_DNA"/>
</dbReference>
<dbReference type="EMBL" id="CP001710">
    <property type="protein sequence ID" value="ADL59121.1"/>
    <property type="molecule type" value="Genomic_DNA"/>
</dbReference>
<dbReference type="RefSeq" id="WP_013296331.1">
    <property type="nucleotide sequence ID" value="NC_014408.1"/>
</dbReference>
<dbReference type="PDB" id="8Q3V">
    <property type="method" value="EM"/>
    <property type="resolution" value="2.08 A"/>
    <property type="chains" value="F/V/f=1-68"/>
</dbReference>
<dbReference type="PDB" id="8Q54">
    <property type="method" value="EM"/>
    <property type="resolution" value="2.39 A"/>
    <property type="chains" value="F/V/f=1-68"/>
</dbReference>
<dbReference type="PDBsum" id="8Q3V"/>
<dbReference type="PDBsum" id="8Q54"/>
<dbReference type="EMDB" id="EMD-18135"/>
<dbReference type="EMDB" id="EMD-18162"/>
<dbReference type="SMR" id="Q50773"/>
<dbReference type="STRING" id="79929.MTBMA_c15420"/>
<dbReference type="TCDB" id="3.C.1.1.1">
    <property type="family name" value="the na(+) transporting methyltetrahydromethanopterin:coenzyme m methyltransferase (nat-mmm) family"/>
</dbReference>
<dbReference type="PaxDb" id="79929-MTBMA_c15420"/>
<dbReference type="GeneID" id="92394149"/>
<dbReference type="GeneID" id="9705251"/>
<dbReference type="KEGG" id="mmg:MTBMA_c15420"/>
<dbReference type="HOGENOM" id="CLU_204306_0_0_2"/>
<dbReference type="OrthoDB" id="74731at2157"/>
<dbReference type="UniPathway" id="UPA00640">
    <property type="reaction ID" value="UER00698"/>
</dbReference>
<dbReference type="Proteomes" id="UP000000345">
    <property type="component" value="Chromosome"/>
</dbReference>
<dbReference type="GO" id="GO:0034708">
    <property type="term" value="C:methyltransferase complex"/>
    <property type="evidence" value="ECO:0000314"/>
    <property type="project" value="UniProtKB"/>
</dbReference>
<dbReference type="GO" id="GO:0005886">
    <property type="term" value="C:plasma membrane"/>
    <property type="evidence" value="ECO:0007669"/>
    <property type="project" value="UniProtKB-SubCell"/>
</dbReference>
<dbReference type="GO" id="GO:0030269">
    <property type="term" value="F:tetrahydromethanopterin S-methyltransferase activity"/>
    <property type="evidence" value="ECO:0007669"/>
    <property type="project" value="UniProtKB-UniRule"/>
</dbReference>
<dbReference type="GO" id="GO:0019386">
    <property type="term" value="P:methanogenesis, from carbon dioxide"/>
    <property type="evidence" value="ECO:0007669"/>
    <property type="project" value="UniProtKB-UniRule"/>
</dbReference>
<dbReference type="GO" id="GO:0032259">
    <property type="term" value="P:methylation"/>
    <property type="evidence" value="ECO:0007669"/>
    <property type="project" value="UniProtKB-KW"/>
</dbReference>
<dbReference type="GO" id="GO:0006730">
    <property type="term" value="P:one-carbon metabolic process"/>
    <property type="evidence" value="ECO:0007669"/>
    <property type="project" value="UniProtKB-UniRule"/>
</dbReference>
<dbReference type="HAMAP" id="MF_01099">
    <property type="entry name" value="MtrF"/>
    <property type="match status" value="1"/>
</dbReference>
<dbReference type="InterPro" id="IPR011307">
    <property type="entry name" value="MeTrfase_F"/>
</dbReference>
<dbReference type="InterPro" id="IPR013347">
    <property type="entry name" value="MeTrfase_F_su"/>
</dbReference>
<dbReference type="NCBIfam" id="TIGR02507">
    <property type="entry name" value="MtrF"/>
    <property type="match status" value="1"/>
</dbReference>
<dbReference type="NCBIfam" id="NF009776">
    <property type="entry name" value="PRK13275.1"/>
    <property type="match status" value="1"/>
</dbReference>
<dbReference type="Pfam" id="PF09472">
    <property type="entry name" value="MtrF"/>
    <property type="match status" value="1"/>
</dbReference>
<dbReference type="PIRSF" id="PIRSF006523">
    <property type="entry name" value="MtrF"/>
    <property type="match status" value="1"/>
</dbReference>
<comment type="function">
    <text evidence="3">Part of a complex that catalyzes the formation of methyl-coenzyme M and tetrahydromethanopterin from coenzyme M and methyl-tetrahydromethanopterin. This is an energy-conserving, sodium-ion translocating step.</text>
</comment>
<comment type="catalytic activity">
    <reaction evidence="3">
        <text>5-methyl-5,6,7,8-tetrahydromethanopterin + coenzyme M + 2 Na(+)(in) = 5,6,7,8-tetrahydromethanopterin + methyl-coenzyme M + 2 Na(+)(out)</text>
        <dbReference type="Rhea" id="RHEA:53492"/>
        <dbReference type="ChEBI" id="CHEBI:29101"/>
        <dbReference type="ChEBI" id="CHEBI:58103"/>
        <dbReference type="ChEBI" id="CHEBI:58116"/>
        <dbReference type="ChEBI" id="CHEBI:58286"/>
        <dbReference type="ChEBI" id="CHEBI:58319"/>
        <dbReference type="EC" id="7.2.1.4"/>
    </reaction>
</comment>
<comment type="biophysicochemical properties">
    <kinetics>
        <KM evidence="3">260 uM for 5-methyl-5,6,7,8-tetrahydromethanopterin</KM>
        <KM evidence="3">60 uM for coenzyme M</KM>
        <Vmax evidence="3">11.6 umol/min/mg enzyme</Vmax>
        <text evidence="3">From other experiments a much lower Km for 5-methyl-5,6,7,8-tetrahydromethanopterin is estimated.</text>
    </kinetics>
</comment>
<comment type="pathway">
    <text>One-carbon metabolism; methanogenesis from CO(2); methyl-coenzyme M from 5,10-methylene-5,6,7,8-tetrahydromethanopterin: step 2/2.</text>
</comment>
<comment type="subunit">
    <text evidence="2">The complex is composed of 8 subunits; MtrA, MtrB, MtrC, MtrD, MtrE, MtrF, MtrG and MtrH.</text>
</comment>
<comment type="subcellular location">
    <subcellularLocation>
        <location evidence="4">Cell membrane</location>
        <topology evidence="4">Single-pass membrane protein</topology>
    </subcellularLocation>
</comment>
<comment type="induction">
    <text evidence="5">Part of the probable mtrEDCBAFGH operon.</text>
</comment>
<comment type="similarity">
    <text evidence="4">Belongs to the MtrF family.</text>
</comment>
<reference key="1">
    <citation type="journal article" date="1995" name="Eur. J. Biochem.">
        <title>The energy conserving N5-methyltetrahydromethanopterin:coenzyme M methyltransferase complex from Methanobacterium thermoautotrophicum is composed of eight different subunits.</title>
        <authorList>
            <person name="Harms U."/>
            <person name="Weiss D.S."/>
            <person name="Gaertner P."/>
            <person name="Linder D."/>
            <person name="Thauer R.K."/>
        </authorList>
    </citation>
    <scope>NUCLEOTIDE SEQUENCE [GENOMIC DNA]</scope>
    <scope>PROTEIN SEQUENCE OF 1-15</scope>
    <scope>SUBUNIT</scope>
    <scope>OPERON STRUCTURE</scope>
    <source>
        <strain>ATCC BAA-927 / DSM 2133 / JCM 14651 / NBRC 100331 / OCM 82 / Marburg</strain>
    </source>
</reference>
<reference key="2">
    <citation type="journal article" date="2010" name="J. Bacteriol.">
        <title>Complete genome sequence of Methanothermobacter marburgensis, a methanoarchaeon model organism.</title>
        <authorList>
            <person name="Liesegang H."/>
            <person name="Kaster A.K."/>
            <person name="Wiezer A."/>
            <person name="Goenrich M."/>
            <person name="Wollherr A."/>
            <person name="Seedorf H."/>
            <person name="Gottschalk G."/>
            <person name="Thauer R.K."/>
        </authorList>
    </citation>
    <scope>NUCLEOTIDE SEQUENCE [LARGE SCALE GENOMIC DNA]</scope>
    <source>
        <strain>ATCC BAA-927 / DSM 2133 / JCM 14651 / NBRC 100331 / OCM 82 / Marburg</strain>
    </source>
</reference>
<reference key="3">
    <citation type="journal article" date="1993" name="Eur. J. Biochem.">
        <title>Purification and properties of N5-methyltetrahydromethanopterin:coenzyme M methyltransferase from Methanobacterium thermoautotrophicum.</title>
        <authorList>
            <person name="Gaertner P."/>
            <person name="Ecker A."/>
            <person name="Fischer R."/>
            <person name="Linder D."/>
            <person name="Fuchs G."/>
            <person name="Thauer R.K."/>
        </authorList>
    </citation>
    <scope>FUNCTION</scope>
    <scope>CATALYTIC ACTIVITY</scope>
    <scope>BIOPHYSICOCHEMICAL PROPERTIES</scope>
    <source>
        <strain>ATCC BAA-927 / DSM 2133 / JCM 14651 / NBRC 100331 / OCM 82 / Marburg</strain>
    </source>
</reference>
<keyword id="KW-0002">3D-structure</keyword>
<keyword id="KW-1003">Cell membrane</keyword>
<keyword id="KW-0903">Direct protein sequencing</keyword>
<keyword id="KW-0472">Membrane</keyword>
<keyword id="KW-0484">Methanogenesis</keyword>
<keyword id="KW-0489">Methyltransferase</keyword>
<keyword id="KW-0554">One-carbon metabolism</keyword>
<keyword id="KW-0808">Transferase</keyword>
<keyword id="KW-1278">Translocase</keyword>
<keyword id="KW-0812">Transmembrane</keyword>
<keyword id="KW-1133">Transmembrane helix</keyword>